<proteinExistence type="inferred from homology"/>
<feature type="chain" id="PRO_0000385315" description="Integrator complex subunit 3 homolog">
    <location>
        <begin position="1"/>
        <end position="1072"/>
    </location>
</feature>
<feature type="region of interest" description="Disordered" evidence="4">
    <location>
        <begin position="920"/>
        <end position="943"/>
    </location>
</feature>
<feature type="region of interest" description="Disordered" evidence="4">
    <location>
        <begin position="1002"/>
        <end position="1072"/>
    </location>
</feature>
<feature type="modified residue" description="Phosphoserine" evidence="1">
    <location>
        <position position="1042"/>
    </location>
</feature>
<feature type="modified residue" description="Phosphoserine" evidence="1">
    <location>
        <position position="1043"/>
    </location>
</feature>
<feature type="modified residue" description="Phosphoserine" evidence="1">
    <location>
        <position position="1047"/>
    </location>
</feature>
<feature type="modified residue" description="Phosphoserine" evidence="1">
    <location>
        <position position="1048"/>
    </location>
</feature>
<keyword id="KW-0963">Cytoplasm</keyword>
<keyword id="KW-0539">Nucleus</keyword>
<keyword id="KW-0597">Phosphoprotein</keyword>
<sequence length="1072" mass="124303">MEQQQSKNIVHVSKLFVCTAVDCKDDIEEKFERSFVTLQMQISGLSDKEMHDMLSQAVCKDKQHEEISIGFLYIMLTDPSMAPKTYRDVTLVSRDGMNGIVTNLTFLVAEKYTKLTEVARRQLIWLLREFVKHQVLSVENVIWNCLRQAGGGDVSSRNLFLIESLLDIFIEFRTWLEGNPFLVQSTVYSFVRLIEDHANPALMSLRQKEVKFTISLIRERFHDIIPLGRDFVRLLQNVARIPEFEQLWRDLIFNPKILHQTFNGIWQLLHIRTSRRFLQCRLLPEMERKISFLASSVKFGNQKRYQDWFQEKYFATPESHSLRSDLIRFIINVIHPTNDMLCSDIIPRWAIIGWLISSCTNPIASANAKLSLFYDWLFFDPAKDNIMNIEPGILVMYHSIRNHPFVSSTLLDFLCRITKNFFVKHEDKIRIGVYNSLKLILEKQVIPNLQPLFESPKLDRELRNLIRDNFREFLSPSANLGQLLYPSMHPAQGYIIKKESDQRILHCENMDLHETGLINTSGSNISMLDEDIKISLVPTDLEIESVFSDETAENLKRVHNIEENTDDDDDLPLSKVRLKEKPRVELAESIAESFDAFVTKRNSYTWEAFLKDFRPLPASAFEEFQLNYVISNTVLILRETLPQQNIFSESKTEEKHLAKSISYPLYGLFRFLYENDEKSKKPFQILLSEICEGIPEIGYLLLYFMKIYCKLQTRKNSQHSYQFKTTIYRQICDAVDEKIGNCLIRDLDLLEKENTNIFLWLLPDIYREFKSIATNNTDLLRITLRCIDAKNVRDILYSVAQGKLTIFKQDGLIDCIRESLDFETYEQFCLWQIVQAHDVPLRCIQDLLPELEAGSHPEALSHFLLLLKNEEPTNEIIRLMLSRETKSKGDPFVTSALRFWCQRYEEKLSEIIASLLTSKYPSSSPNKRKRPPKGISVSTSTPSADQVLNHLEHYRRSCRHGTGTGLYVHDMMQRALQSAYSHSNDSTKKQFSDLFALAAEEDTTVGRRGGSGRGRKQPGSKKDVSNHGTSKKNAEMVKTIYSSDENSSEEDWSKSKMTQTAKRRKKANNDSD</sequence>
<organism>
    <name type="scientific">Drosophila yakuba</name>
    <name type="common">Fruit fly</name>
    <dbReference type="NCBI Taxonomy" id="7245"/>
    <lineage>
        <taxon>Eukaryota</taxon>
        <taxon>Metazoa</taxon>
        <taxon>Ecdysozoa</taxon>
        <taxon>Arthropoda</taxon>
        <taxon>Hexapoda</taxon>
        <taxon>Insecta</taxon>
        <taxon>Pterygota</taxon>
        <taxon>Neoptera</taxon>
        <taxon>Endopterygota</taxon>
        <taxon>Diptera</taxon>
        <taxon>Brachycera</taxon>
        <taxon>Muscomorpha</taxon>
        <taxon>Ephydroidea</taxon>
        <taxon>Drosophilidae</taxon>
        <taxon>Drosophila</taxon>
        <taxon>Sophophora</taxon>
    </lineage>
</organism>
<reference key="1">
    <citation type="journal article" date="2007" name="Nature">
        <title>Evolution of genes and genomes on the Drosophila phylogeny.</title>
        <authorList>
            <consortium name="Drosophila 12 genomes consortium"/>
        </authorList>
    </citation>
    <scope>NUCLEOTIDE SEQUENCE [LARGE SCALE GENOMIC DNA]</scope>
    <source>
        <strain>Tai18E2 / Tucson 14021-0261.01</strain>
    </source>
</reference>
<accession>B4ISV0</accession>
<evidence type="ECO:0000250" key="1"/>
<evidence type="ECO:0000250" key="2">
    <source>
        <dbReference type="UniProtKB" id="Q68E01"/>
    </source>
</evidence>
<evidence type="ECO:0000250" key="3">
    <source>
        <dbReference type="UniProtKB" id="Q7PLS8"/>
    </source>
</evidence>
<evidence type="ECO:0000256" key="4">
    <source>
        <dbReference type="SAM" id="MobiDB-lite"/>
    </source>
</evidence>
<evidence type="ECO:0000305" key="5"/>
<name>INT3_DROYA</name>
<dbReference type="EMBL" id="CH891608">
    <property type="protein sequence ID" value="EDW99532.1"/>
    <property type="molecule type" value="Genomic_DNA"/>
</dbReference>
<dbReference type="RefSeq" id="XP_015045263.1">
    <property type="nucleotide sequence ID" value="XM_015189777.1"/>
</dbReference>
<dbReference type="SMR" id="B4ISV0"/>
<dbReference type="EnsemblMetazoa" id="FBtr0257860">
    <property type="protein sequence ID" value="FBpp0256352"/>
    <property type="gene ID" value="FBgn0229156"/>
</dbReference>
<dbReference type="EnsemblMetazoa" id="XM_002086026.3">
    <property type="protein sequence ID" value="XP_002086062.2"/>
    <property type="gene ID" value="LOC6539157"/>
</dbReference>
<dbReference type="GeneID" id="6539157"/>
<dbReference type="KEGG" id="dya:Dyak_GE11342"/>
<dbReference type="CTD" id="65123"/>
<dbReference type="eggNOG" id="KOG4262">
    <property type="taxonomic scope" value="Eukaryota"/>
</dbReference>
<dbReference type="HOGENOM" id="CLU_007659_0_0_1"/>
<dbReference type="OMA" id="FEQYCLW"/>
<dbReference type="OrthoDB" id="2021145at2759"/>
<dbReference type="PhylomeDB" id="B4ISV0"/>
<dbReference type="Proteomes" id="UP000002282">
    <property type="component" value="Unassembled WGS sequence"/>
</dbReference>
<dbReference type="GO" id="GO:0005737">
    <property type="term" value="C:cytoplasm"/>
    <property type="evidence" value="ECO:0007669"/>
    <property type="project" value="UniProtKB-SubCell"/>
</dbReference>
<dbReference type="GO" id="GO:0005634">
    <property type="term" value="C:nucleus"/>
    <property type="evidence" value="ECO:0007669"/>
    <property type="project" value="UniProtKB-SubCell"/>
</dbReference>
<dbReference type="InterPro" id="IPR056518">
    <property type="entry name" value="HEAT_Ints3_C"/>
</dbReference>
<dbReference type="InterPro" id="IPR045334">
    <property type="entry name" value="INTS3"/>
</dbReference>
<dbReference type="InterPro" id="IPR019333">
    <property type="entry name" value="INTS3_N"/>
</dbReference>
<dbReference type="PANTHER" id="PTHR13587">
    <property type="entry name" value="INTEGRATOR COMPLEX SUBUNIT 3"/>
    <property type="match status" value="1"/>
</dbReference>
<dbReference type="PANTHER" id="PTHR13587:SF7">
    <property type="entry name" value="INTEGRATOR COMPLEX SUBUNIT 3"/>
    <property type="match status" value="1"/>
</dbReference>
<dbReference type="Pfam" id="PF24566">
    <property type="entry name" value="HEAT_Ints3_C"/>
    <property type="match status" value="1"/>
</dbReference>
<dbReference type="Pfam" id="PF10189">
    <property type="entry name" value="Ints3_N"/>
    <property type="match status" value="1"/>
</dbReference>
<gene>
    <name type="primary">IntS3</name>
    <name type="ORF">GE11342</name>
</gene>
<protein>
    <recommendedName>
        <fullName>Integrator complex subunit 3 homolog</fullName>
    </recommendedName>
    <alternativeName>
        <fullName>SOSS complex subunit A homolog</fullName>
    </alternativeName>
</protein>
<comment type="function">
    <text evidence="3">Component of the integrator complex, a multiprotein complex that terminates RNA polymerase II (Pol II) transcription in the promoter-proximal region of genes. The integrator complex provides a quality checkpoint during transcription elongation by driving premature transcription termination of transcripts that are unfavorably configured for transcriptional elongation: the complex terminates transcription by (1) catalyzing dephosphorylation of the C-terminal domain (CTD) of Pol II subunit Polr2A/Rbp1 and Spt5, and (2) degrading the exiting nascent RNA transcript via endonuclease activity. The integrator complex is also involved in the 3'-end processing of the U7 snRNA, and also the spliceosomal snRNAs U1, U2, U4 and U5.</text>
</comment>
<comment type="subunit">
    <text evidence="3">Belongs to the multiprotein complex Integrator, at least composed of IntS1, IntS2, IntS3, IntS4, omd/IntS5, IntS6, defl/IntS7, IntS8, IntS9, IntS10, IntS11, IntS12, asun/IntS13, IntS14 and IntS15. The core complex associates with protein phosphatase 2A subunits mts/PP2A and Pp2A-29B, to form the Integrator-PP2A (INTAC) complex.</text>
</comment>
<comment type="subcellular location">
    <subcellularLocation>
        <location evidence="2">Nucleus</location>
    </subcellularLocation>
    <subcellularLocation>
        <location evidence="2">Cytoplasm</location>
    </subcellularLocation>
</comment>
<comment type="similarity">
    <text evidence="5">Belongs to the Integrator subunit 3 family.</text>
</comment>